<keyword id="KW-0012">Acyltransferase</keyword>
<keyword id="KW-0067">ATP-binding</keyword>
<keyword id="KW-0547">Nucleotide-binding</keyword>
<keyword id="KW-0539">Nucleus</keyword>
<keyword id="KW-1185">Reference proteome</keyword>
<keyword id="KW-0698">rRNA processing</keyword>
<keyword id="KW-0808">Transferase</keyword>
<keyword id="KW-0819">tRNA processing</keyword>
<feature type="chain" id="PRO_0000215885" description="RNA cytidine acetyltransferase">
    <location>
        <begin position="1"/>
        <end position="1043"/>
    </location>
</feature>
<feature type="domain" description="N-acetyltransferase" evidence="2">
    <location>
        <begin position="551"/>
        <end position="736"/>
    </location>
</feature>
<feature type="region of interest" description="Disordered" evidence="3">
    <location>
        <begin position="1020"/>
        <end position="1043"/>
    </location>
</feature>
<feature type="compositionally biased region" description="Basic residues" evidence="3">
    <location>
        <begin position="1030"/>
        <end position="1043"/>
    </location>
</feature>
<feature type="binding site" evidence="2">
    <location>
        <begin position="285"/>
        <end position="294"/>
    </location>
    <ligand>
        <name>ATP</name>
        <dbReference type="ChEBI" id="CHEBI:30616"/>
    </ligand>
</feature>
<feature type="binding site" evidence="2">
    <location>
        <position position="462"/>
    </location>
    <ligand>
        <name>ATP</name>
        <dbReference type="ChEBI" id="CHEBI:30616"/>
    </ligand>
</feature>
<feature type="binding site" evidence="2">
    <location>
        <begin position="622"/>
        <end position="624"/>
    </location>
    <ligand>
        <name>acetyl-CoA</name>
        <dbReference type="ChEBI" id="CHEBI:57288"/>
    </ligand>
</feature>
<feature type="binding site" evidence="2">
    <location>
        <begin position="629"/>
        <end position="635"/>
    </location>
    <ligand>
        <name>acetyl-CoA</name>
        <dbReference type="ChEBI" id="CHEBI:57288"/>
    </ligand>
</feature>
<feature type="binding site" evidence="2">
    <location>
        <position position="723"/>
    </location>
    <ligand>
        <name>acetyl-CoA</name>
        <dbReference type="ChEBI" id="CHEBI:57288"/>
    </ligand>
</feature>
<proteinExistence type="inferred from homology"/>
<dbReference type="EC" id="2.3.1.-" evidence="2"/>
<dbReference type="EMBL" id="FO080647">
    <property type="protein sequence ID" value="CCD65443.1"/>
    <property type="molecule type" value="Genomic_DNA"/>
</dbReference>
<dbReference type="PIR" id="T15191">
    <property type="entry name" value="T15191"/>
</dbReference>
<dbReference type="RefSeq" id="NP_491574.1">
    <property type="nucleotide sequence ID" value="NM_059173.5"/>
</dbReference>
<dbReference type="SMR" id="O01757"/>
<dbReference type="BioGRID" id="37640">
    <property type="interactions" value="3"/>
</dbReference>
<dbReference type="FunCoup" id="O01757">
    <property type="interactions" value="3058"/>
</dbReference>
<dbReference type="IntAct" id="O01757">
    <property type="interactions" value="1"/>
</dbReference>
<dbReference type="STRING" id="6239.F55A12.8.1"/>
<dbReference type="PaxDb" id="6239-F55A12.8"/>
<dbReference type="PeptideAtlas" id="O01757"/>
<dbReference type="EnsemblMetazoa" id="F55A12.8.1">
    <property type="protein sequence ID" value="F55A12.8.1"/>
    <property type="gene ID" value="WBGene00018866"/>
</dbReference>
<dbReference type="GeneID" id="172182"/>
<dbReference type="KEGG" id="cel:CELE_F55A12.8"/>
<dbReference type="UCSC" id="F55A12.8">
    <property type="organism name" value="c. elegans"/>
</dbReference>
<dbReference type="AGR" id="WB:WBGene00018866"/>
<dbReference type="CTD" id="172182"/>
<dbReference type="WormBase" id="F55A12.8">
    <property type="protein sequence ID" value="CE11131"/>
    <property type="gene ID" value="WBGene00018866"/>
    <property type="gene designation" value="nath-10"/>
</dbReference>
<dbReference type="eggNOG" id="KOG2036">
    <property type="taxonomic scope" value="Eukaryota"/>
</dbReference>
<dbReference type="GeneTree" id="ENSGT00390000009140"/>
<dbReference type="HOGENOM" id="CLU_004652_0_0_1"/>
<dbReference type="InParanoid" id="O01757"/>
<dbReference type="OMA" id="HLHYIMS"/>
<dbReference type="OrthoDB" id="10067491at2759"/>
<dbReference type="PhylomeDB" id="O01757"/>
<dbReference type="PRO" id="PR:O01757"/>
<dbReference type="Proteomes" id="UP000001940">
    <property type="component" value="Chromosome I"/>
</dbReference>
<dbReference type="Bgee" id="WBGene00018866">
    <property type="expression patterns" value="Expressed in germ line (C elegans) and 4 other cell types or tissues"/>
</dbReference>
<dbReference type="GO" id="GO:0005730">
    <property type="term" value="C:nucleolus"/>
    <property type="evidence" value="ECO:0000318"/>
    <property type="project" value="GO_Central"/>
</dbReference>
<dbReference type="GO" id="GO:0032040">
    <property type="term" value="C:small-subunit processome"/>
    <property type="evidence" value="ECO:0000250"/>
    <property type="project" value="UniProtKB"/>
</dbReference>
<dbReference type="GO" id="GO:1990883">
    <property type="term" value="F:18S rRNA cytidine N-acetyltransferase activity"/>
    <property type="evidence" value="ECO:0000318"/>
    <property type="project" value="GO_Central"/>
</dbReference>
<dbReference type="GO" id="GO:0005524">
    <property type="term" value="F:ATP binding"/>
    <property type="evidence" value="ECO:0007669"/>
    <property type="project" value="UniProtKB-UniRule"/>
</dbReference>
<dbReference type="GO" id="GO:0000049">
    <property type="term" value="F:tRNA binding"/>
    <property type="evidence" value="ECO:0000318"/>
    <property type="project" value="GO_Central"/>
</dbReference>
<dbReference type="GO" id="GO:0051392">
    <property type="term" value="F:tRNA N4-acetyltransferase activity"/>
    <property type="evidence" value="ECO:0000318"/>
    <property type="project" value="GO_Central"/>
</dbReference>
<dbReference type="GO" id="GO:0042274">
    <property type="term" value="P:ribosomal small subunit biogenesis"/>
    <property type="evidence" value="ECO:0000250"/>
    <property type="project" value="UniProtKB"/>
</dbReference>
<dbReference type="GO" id="GO:1904812">
    <property type="term" value="P:rRNA acetylation involved in maturation of SSU-rRNA"/>
    <property type="evidence" value="ECO:0000318"/>
    <property type="project" value="GO_Central"/>
</dbReference>
<dbReference type="GO" id="GO:0051391">
    <property type="term" value="P:tRNA acetylation"/>
    <property type="evidence" value="ECO:0000318"/>
    <property type="project" value="GO_Central"/>
</dbReference>
<dbReference type="GO" id="GO:0002101">
    <property type="term" value="P:tRNA wobble cytosine modification"/>
    <property type="evidence" value="ECO:0000318"/>
    <property type="project" value="GO_Central"/>
</dbReference>
<dbReference type="CDD" id="cd04301">
    <property type="entry name" value="NAT_SF"/>
    <property type="match status" value="1"/>
</dbReference>
<dbReference type="FunFam" id="3.40.50.300:FF:002218">
    <property type="entry name" value="tRNA(Met) cytidine acetyltransferase TmcA"/>
    <property type="match status" value="1"/>
</dbReference>
<dbReference type="Gene3D" id="3.40.50.11040">
    <property type="match status" value="1"/>
</dbReference>
<dbReference type="Gene3D" id="3.40.630.30">
    <property type="match status" value="1"/>
</dbReference>
<dbReference type="Gene3D" id="3.40.50.300">
    <property type="entry name" value="P-loop containing nucleotide triphosphate hydrolases"/>
    <property type="match status" value="1"/>
</dbReference>
<dbReference type="HAMAP" id="MF_03211">
    <property type="entry name" value="RNA_acetyltr_Nat10"/>
    <property type="match status" value="1"/>
</dbReference>
<dbReference type="InterPro" id="IPR000182">
    <property type="entry name" value="GNAT_dom"/>
</dbReference>
<dbReference type="InterPro" id="IPR033688">
    <property type="entry name" value="NAT10"/>
</dbReference>
<dbReference type="InterPro" id="IPR007807">
    <property type="entry name" value="NAT10/TcmA_helicase"/>
</dbReference>
<dbReference type="InterPro" id="IPR027417">
    <property type="entry name" value="P-loop_NTPase"/>
</dbReference>
<dbReference type="InterPro" id="IPR032672">
    <property type="entry name" value="TmcA/NAT10/Kre33"/>
</dbReference>
<dbReference type="InterPro" id="IPR013562">
    <property type="entry name" value="TmcA_N"/>
</dbReference>
<dbReference type="InterPro" id="IPR027992">
    <property type="entry name" value="tRNA_bind_dom"/>
</dbReference>
<dbReference type="PANTHER" id="PTHR10925">
    <property type="entry name" value="N-ACETYLTRANSFERASE 10"/>
    <property type="match status" value="1"/>
</dbReference>
<dbReference type="PANTHER" id="PTHR10925:SF5">
    <property type="entry name" value="RNA CYTIDINE ACETYLTRANSFERASE"/>
    <property type="match status" value="1"/>
</dbReference>
<dbReference type="Pfam" id="PF13718">
    <property type="entry name" value="GNAT_acetyltr_2"/>
    <property type="match status" value="1"/>
</dbReference>
<dbReference type="Pfam" id="PF05127">
    <property type="entry name" value="NAT10_TcmA_helicase"/>
    <property type="match status" value="1"/>
</dbReference>
<dbReference type="Pfam" id="PF08351">
    <property type="entry name" value="TmcA_N"/>
    <property type="match status" value="1"/>
</dbReference>
<dbReference type="Pfam" id="PF13725">
    <property type="entry name" value="tRNA_bind_2"/>
    <property type="match status" value="1"/>
</dbReference>
<sequence>MRTKLDGRIRTQIENGVASGHRSMFAVVGDKARDQVPILYHILSKSTVSARPNVLWCYKKELSFSTHRAKKAKKMKKATTTISGSLPDADPFDVFISSTQIRYCYYNETEKILGNTFGVLVLQDFEAMTPNLLARTIETIEGGGMVILLMQSVRSLRQLYTISMDVHNRYRTEAHNEITARFNERFILSLASCSSVLVLDDQLRVLPISSHIENVEAIPASQKKIQSESDAELASLKEAMKETKPIGPLLSRARTACQAKALLRFLDVITEKQSNVTCSLTAGRGRGKSAAVGLSLAGAIAFGYTNIFVTSPSPENLKTLFEFVVKGFDALDYQEHTDYELIQSANPEFKNCLVRINVFREHKQTIQYISPTDVQKLGQCELIVIDEAAAIPLPLVKELISGPYISFLSSTINGYEGTGRSLSLKLLQQLRQQSAGGEAKEGKSASNKGKTLHEMHMEESIRYKPGDKIEKWLNRLLCLDATNCQLKLECGTPPPAACELYIVNRDTLFSFHDASEAFLQQVMAIFVSAHYKNSPNDLQMLSDAPAHNLFVLMAPIDKSRKTIPEVLAVVQVCLEGRLDSDNIQNGLESGKRAAGDLLPWTVSQQFMDKQFGTLCGGRIVRVAVHPDYQSMGYGGRAVQLIEQYYLGLATSLDEEEKAPAPPSKTVIKQVKDGHTVELLEERIEPRADLPPLLQRLDERKPERLDYLGVSFGLTVPLLKFWKRNEFVPVYIRQNSNDITGEHTCIILKGLEHGGSDSDEEPSATWLPVYWREFRRRIVNLLSFDFSSFPAQMALSLLQLKNKHVEKQMKRLVIERSELAIHLSNTDLRRMSQYGRNMVDSHIITDILPIVAKLNFEQRLPQELKLAVTQSAILLARGLQHKHFEDISKELDLPMNQIFALLTKAIRRIGDWFDEVCETAVRENLDKEAEASAANKPTSSLPKAVPLANLEDELESAAKEIRARHDRDRKALLAELGNELQKYEIIQDEKELAEAYESVNMKYANKLVSVKSKRTAIQAAIPDAKDPANKNAKKKKRFSSGGRR</sequence>
<organism>
    <name type="scientific">Caenorhabditis elegans</name>
    <dbReference type="NCBI Taxonomy" id="6239"/>
    <lineage>
        <taxon>Eukaryota</taxon>
        <taxon>Metazoa</taxon>
        <taxon>Ecdysozoa</taxon>
        <taxon>Nematoda</taxon>
        <taxon>Chromadorea</taxon>
        <taxon>Rhabditida</taxon>
        <taxon>Rhabditina</taxon>
        <taxon>Rhabditomorpha</taxon>
        <taxon>Rhabditoidea</taxon>
        <taxon>Rhabditidae</taxon>
        <taxon>Peloderinae</taxon>
        <taxon>Caenorhabditis</taxon>
    </lineage>
</organism>
<comment type="function">
    <text evidence="1 2">RNA cytidine acetyltransferase with specificity toward both 18S rRNA and tRNAs. Catalyzes the formation of N(4)-acetylcytidine (ac4C) in 18S rRNA. Required for early nucleolar cleavages of precursor rRNA at sites A0, A1 and A2 during 18S rRNA synthesis. Catalyzes the formation of ac4C in serine and leucine tRNAs. Requires a tRNA-binding adapter protein for full tRNA acetyltransferase activity but not for 18S rRNA acetylation. Part of the small subunit (SSU) processome, first precursor of the small eukaryotic ribosomal subunit. During the assembly of the SSU processome in the nucleolus, many ribosome biogenesis factors, an RNA chaperone and ribosomal proteins associate with the nascent pre-rRNA and work in concert to generate RNA folding, modifications, rearrangements and cleavage as well as targeted degradation of pre-ribosomal RNA by the RNA exosome (By similarity).</text>
</comment>
<comment type="catalytic activity">
    <reaction evidence="2">
        <text>a cytidine in 18S rRNA + acetyl-CoA + ATP + H2O = an N(4)-acetylcytidine in 18S rRNA + ADP + phosphate + CoA + H(+)</text>
        <dbReference type="Rhea" id="RHEA:51424"/>
        <dbReference type="Rhea" id="RHEA-COMP:13575"/>
        <dbReference type="Rhea" id="RHEA-COMP:13576"/>
        <dbReference type="ChEBI" id="CHEBI:15377"/>
        <dbReference type="ChEBI" id="CHEBI:15378"/>
        <dbReference type="ChEBI" id="CHEBI:30616"/>
        <dbReference type="ChEBI" id="CHEBI:43474"/>
        <dbReference type="ChEBI" id="CHEBI:57287"/>
        <dbReference type="ChEBI" id="CHEBI:57288"/>
        <dbReference type="ChEBI" id="CHEBI:74900"/>
        <dbReference type="ChEBI" id="CHEBI:82748"/>
        <dbReference type="ChEBI" id="CHEBI:456216"/>
    </reaction>
</comment>
<comment type="catalytic activity">
    <reaction evidence="2">
        <text>a cytidine in tRNA + acetyl-CoA + ATP + H2O = an N(4)-acetylcytidine in tRNA + ADP + phosphate + CoA + H(+)</text>
        <dbReference type="Rhea" id="RHEA:53876"/>
        <dbReference type="Rhea" id="RHEA-COMP:13670"/>
        <dbReference type="Rhea" id="RHEA-COMP:13671"/>
        <dbReference type="ChEBI" id="CHEBI:15377"/>
        <dbReference type="ChEBI" id="CHEBI:15378"/>
        <dbReference type="ChEBI" id="CHEBI:30616"/>
        <dbReference type="ChEBI" id="CHEBI:43474"/>
        <dbReference type="ChEBI" id="CHEBI:57287"/>
        <dbReference type="ChEBI" id="CHEBI:57288"/>
        <dbReference type="ChEBI" id="CHEBI:74900"/>
        <dbReference type="ChEBI" id="CHEBI:82748"/>
        <dbReference type="ChEBI" id="CHEBI:456216"/>
    </reaction>
</comment>
<comment type="subunit">
    <text evidence="1">Part of the small subunit (SSU) processome, composed of more than 70 proteins and the RNA chaperone small nucleolar RNA (snoRNA) U3.</text>
</comment>
<comment type="subcellular location">
    <subcellularLocation>
        <location evidence="2">Nucleus</location>
        <location evidence="2">Nucleolus</location>
    </subcellularLocation>
</comment>
<comment type="similarity">
    <text evidence="2">Belongs to the RNA cytidine acetyltransferase family. NAT10 subfamily.</text>
</comment>
<reference key="1">
    <citation type="journal article" date="1998" name="Science">
        <title>Genome sequence of the nematode C. elegans: a platform for investigating biology.</title>
        <authorList>
            <consortium name="The C. elegans sequencing consortium"/>
        </authorList>
    </citation>
    <scope>NUCLEOTIDE SEQUENCE [LARGE SCALE GENOMIC DNA]</scope>
    <source>
        <strain>Bristol N2</strain>
    </source>
</reference>
<evidence type="ECO:0000250" key="1">
    <source>
        <dbReference type="UniProtKB" id="Q9H0A0"/>
    </source>
</evidence>
<evidence type="ECO:0000255" key="2">
    <source>
        <dbReference type="HAMAP-Rule" id="MF_03211"/>
    </source>
</evidence>
<evidence type="ECO:0000256" key="3">
    <source>
        <dbReference type="SAM" id="MobiDB-lite"/>
    </source>
</evidence>
<accession>O01757</accession>
<protein>
    <recommendedName>
        <fullName evidence="2">RNA cytidine acetyltransferase</fullName>
        <ecNumber evidence="2">2.3.1.-</ecNumber>
    </recommendedName>
    <alternativeName>
        <fullName evidence="2">18S rRNA cytosine acetyltransferase</fullName>
    </alternativeName>
</protein>
<gene>
    <name evidence="2" type="primary">nath-10</name>
    <name type="ORF">F55A12.8</name>
</gene>
<name>NAT10_CAEEL</name>